<reference key="1">
    <citation type="submission" date="1999-06" db="EMBL/GenBank/DDBJ databases">
        <title>Mapping, cloning, and complete sequence annotation of the 35-kb plastid genome of Toxoplasma gondii.</title>
        <authorList>
            <person name="Kissinger J.C."/>
            <person name="Donald R.G."/>
            <person name="Moulton A.L."/>
            <person name="Gutell R."/>
            <person name="Aiello D.P."/>
            <person name="Lang-Unnasch N."/>
            <person name="Roos D.S."/>
        </authorList>
    </citation>
    <scope>NUCLEOTIDE SEQUENCE [GENOMIC DNA]</scope>
    <source>
        <strain>RH</strain>
    </source>
</reference>
<proteinExistence type="inferred from homology"/>
<protein>
    <recommendedName>
        <fullName evidence="2">Small ribosomal subunit protein uS12c</fullName>
    </recommendedName>
    <alternativeName>
        <fullName>Apicoplast 30S ribosomal protein S12</fullName>
    </alternativeName>
</protein>
<accession>Q9TMN0</accession>
<keyword id="KW-0933">Apicoplast</keyword>
<keyword id="KW-0934">Plastid</keyword>
<keyword id="KW-0687">Ribonucleoprotein</keyword>
<keyword id="KW-0689">Ribosomal protein</keyword>
<keyword id="KW-0694">RNA-binding</keyword>
<keyword id="KW-0699">rRNA-binding</keyword>
<keyword id="KW-0820">tRNA-binding</keyword>
<feature type="chain" id="PRO_0000296083" description="Small ribosomal subunit protein uS12c">
    <location>
        <begin position="1"/>
        <end position="121"/>
    </location>
</feature>
<sequence>MLTNNQLLKHSRIKKKKQSYNFYTKPQIKGLCIKVFTRTPKKPNSALRKIAKIKLKNKKEILAYIPGEGHALQDHNFVLIKKGRVQDLPGIKYKVIRGVLDTIGVLNRKSSRSKYGTKKII</sequence>
<organism>
    <name type="scientific">Toxoplasma gondii</name>
    <dbReference type="NCBI Taxonomy" id="5811"/>
    <lineage>
        <taxon>Eukaryota</taxon>
        <taxon>Sar</taxon>
        <taxon>Alveolata</taxon>
        <taxon>Apicomplexa</taxon>
        <taxon>Conoidasida</taxon>
        <taxon>Coccidia</taxon>
        <taxon>Eucoccidiorida</taxon>
        <taxon>Eimeriorina</taxon>
        <taxon>Sarcocystidae</taxon>
        <taxon>Toxoplasma</taxon>
    </lineage>
</organism>
<comment type="function">
    <text evidence="1">With S4 and S5 plays an important role in translational accuracy. Located at the interface of the 30S and 50S subunits (By similarity).</text>
</comment>
<comment type="subunit">
    <text evidence="1">Part of the 30S ribosomal subunit.</text>
</comment>
<comment type="subcellular location">
    <subcellularLocation>
        <location>Plastid</location>
        <location>Apicoplast</location>
    </subcellularLocation>
</comment>
<comment type="similarity">
    <text evidence="2">Belongs to the universal ribosomal protein uS12 family.</text>
</comment>
<dbReference type="EMBL" id="U87145">
    <property type="protein sequence ID" value="AAD41143.1"/>
    <property type="molecule type" value="Genomic_DNA"/>
</dbReference>
<dbReference type="RefSeq" id="NP_044557.1">
    <property type="nucleotide sequence ID" value="NC_001799.1"/>
</dbReference>
<dbReference type="SMR" id="Q9TMN0"/>
<dbReference type="EnsemblProtists" id="TGME49_302055-t26_1">
    <property type="protein sequence ID" value="TGME49_302055-t26_1-p1-CDS1"/>
    <property type="gene ID" value="TGME49_302055"/>
</dbReference>
<dbReference type="GeneID" id="1466606"/>
<dbReference type="VEuPathDB" id="ToxoDB:TGARI_302055"/>
<dbReference type="VEuPathDB" id="ToxoDB:TGCAST_302055"/>
<dbReference type="VEuPathDB" id="ToxoDB:TGCOUG_302055"/>
<dbReference type="VEuPathDB" id="ToxoDB:TGDOM2_302055"/>
<dbReference type="VEuPathDB" id="ToxoDB:TGFOU_302055"/>
<dbReference type="VEuPathDB" id="ToxoDB:TGGT1_219770"/>
<dbReference type="VEuPathDB" id="ToxoDB:TGMAS_302055"/>
<dbReference type="VEuPathDB" id="ToxoDB:TGME49_302055"/>
<dbReference type="VEuPathDB" id="ToxoDB:TGP89_302055"/>
<dbReference type="VEuPathDB" id="ToxoDB:TGPRC2_302055"/>
<dbReference type="VEuPathDB" id="ToxoDB:TGRH88_086400"/>
<dbReference type="VEuPathDB" id="ToxoDB:TGRUB_302055"/>
<dbReference type="VEuPathDB" id="ToxoDB:TGVAND_219770"/>
<dbReference type="VEuPathDB" id="ToxoDB:TGVEG_219770"/>
<dbReference type="GO" id="GO:0020011">
    <property type="term" value="C:apicoplast"/>
    <property type="evidence" value="ECO:0007669"/>
    <property type="project" value="UniProtKB-SubCell"/>
</dbReference>
<dbReference type="GO" id="GO:0015935">
    <property type="term" value="C:small ribosomal subunit"/>
    <property type="evidence" value="ECO:0007669"/>
    <property type="project" value="InterPro"/>
</dbReference>
<dbReference type="GO" id="GO:0019843">
    <property type="term" value="F:rRNA binding"/>
    <property type="evidence" value="ECO:0007669"/>
    <property type="project" value="UniProtKB-KW"/>
</dbReference>
<dbReference type="GO" id="GO:0003735">
    <property type="term" value="F:structural constituent of ribosome"/>
    <property type="evidence" value="ECO:0007669"/>
    <property type="project" value="InterPro"/>
</dbReference>
<dbReference type="GO" id="GO:0000049">
    <property type="term" value="F:tRNA binding"/>
    <property type="evidence" value="ECO:0007669"/>
    <property type="project" value="UniProtKB-KW"/>
</dbReference>
<dbReference type="GO" id="GO:0006412">
    <property type="term" value="P:translation"/>
    <property type="evidence" value="ECO:0007669"/>
    <property type="project" value="InterPro"/>
</dbReference>
<dbReference type="CDD" id="cd03368">
    <property type="entry name" value="Ribosomal_S12"/>
    <property type="match status" value="1"/>
</dbReference>
<dbReference type="FunFam" id="2.40.50.140:FF:000099">
    <property type="entry name" value="Ribosomal protein S12, mitochondrial"/>
    <property type="match status" value="1"/>
</dbReference>
<dbReference type="Gene3D" id="2.40.50.140">
    <property type="entry name" value="Nucleic acid-binding proteins"/>
    <property type="match status" value="1"/>
</dbReference>
<dbReference type="InterPro" id="IPR012340">
    <property type="entry name" value="NA-bd_OB-fold"/>
</dbReference>
<dbReference type="InterPro" id="IPR006032">
    <property type="entry name" value="Ribosomal_uS12"/>
</dbReference>
<dbReference type="InterPro" id="IPR005679">
    <property type="entry name" value="Ribosomal_uS12_bac"/>
</dbReference>
<dbReference type="NCBIfam" id="TIGR00981">
    <property type="entry name" value="rpsL_bact"/>
    <property type="match status" value="1"/>
</dbReference>
<dbReference type="PANTHER" id="PTHR11652">
    <property type="entry name" value="30S RIBOSOMAL PROTEIN S12 FAMILY MEMBER"/>
    <property type="match status" value="1"/>
</dbReference>
<dbReference type="Pfam" id="PF00164">
    <property type="entry name" value="Ribosom_S12_S23"/>
    <property type="match status" value="1"/>
</dbReference>
<dbReference type="PIRSF" id="PIRSF002133">
    <property type="entry name" value="Ribosomal_S12/S23"/>
    <property type="match status" value="1"/>
</dbReference>
<dbReference type="PRINTS" id="PR01034">
    <property type="entry name" value="RIBOSOMALS12"/>
</dbReference>
<dbReference type="SUPFAM" id="SSF50249">
    <property type="entry name" value="Nucleic acid-binding proteins"/>
    <property type="match status" value="1"/>
</dbReference>
<dbReference type="PROSITE" id="PS00055">
    <property type="entry name" value="RIBOSOMAL_S12"/>
    <property type="match status" value="1"/>
</dbReference>
<evidence type="ECO:0000250" key="1"/>
<evidence type="ECO:0000305" key="2"/>
<name>RR12_TOXGO</name>
<gene>
    <name type="primary">rps12</name>
</gene>
<geneLocation type="apicoplast"/>